<accession>A1U3K1</accession>
<evidence type="ECO:0000255" key="1">
    <source>
        <dbReference type="HAMAP-Rule" id="MF_00472"/>
    </source>
</evidence>
<sequence length="238" mass="26593">MNNQNVDQNEIAKFEALASRWWDPTSEFKPLHDINPLRLNYIDERVSLAGKRALDVGCGGGLLSEGMALRGAHVTGIDMGEAPLSVAKLHGLESGVKVDYRQTTIEELARDPEHAGQYDVVTCLEMLEHVPDPASVIRACASMLKPGGHMFVSTINRNPKSFLFAIVGAEYVLNLLPKGTHEWKKFIRPSEMSDHLRHAGLEVRELTGMTYNPITKVYKLGRDVDVNYLMHARDTRED</sequence>
<reference key="1">
    <citation type="journal article" date="2011" name="Appl. Environ. Microbiol.">
        <title>Genomic potential of Marinobacter aquaeolei, a biogeochemical 'opportunitroph'.</title>
        <authorList>
            <person name="Singer E."/>
            <person name="Webb E.A."/>
            <person name="Nelson W.C."/>
            <person name="Heidelberg J.F."/>
            <person name="Ivanova N."/>
            <person name="Pati A."/>
            <person name="Edwards K.J."/>
        </authorList>
    </citation>
    <scope>NUCLEOTIDE SEQUENCE [LARGE SCALE GENOMIC DNA]</scope>
    <source>
        <strain>ATCC 700491 / DSM 11845 / VT8</strain>
    </source>
</reference>
<gene>
    <name evidence="1" type="primary">ubiG</name>
    <name type="ordered locus">Maqu_2495</name>
</gene>
<dbReference type="EC" id="2.1.1.222" evidence="1"/>
<dbReference type="EC" id="2.1.1.64" evidence="1"/>
<dbReference type="EMBL" id="CP000514">
    <property type="protein sequence ID" value="ABM19570.1"/>
    <property type="molecule type" value="Genomic_DNA"/>
</dbReference>
<dbReference type="RefSeq" id="WP_011785954.1">
    <property type="nucleotide sequence ID" value="NC_008740.1"/>
</dbReference>
<dbReference type="SMR" id="A1U3K1"/>
<dbReference type="STRING" id="351348.Maqu_2495"/>
<dbReference type="KEGG" id="maq:Maqu_2495"/>
<dbReference type="eggNOG" id="COG2227">
    <property type="taxonomic scope" value="Bacteria"/>
</dbReference>
<dbReference type="HOGENOM" id="CLU_042432_5_0_6"/>
<dbReference type="OrthoDB" id="9801538at2"/>
<dbReference type="UniPathway" id="UPA00232"/>
<dbReference type="Proteomes" id="UP000000998">
    <property type="component" value="Chromosome"/>
</dbReference>
<dbReference type="GO" id="GO:0102208">
    <property type="term" value="F:2-polyprenyl-6-hydroxyphenol methylase activity"/>
    <property type="evidence" value="ECO:0007669"/>
    <property type="project" value="UniProtKB-EC"/>
</dbReference>
<dbReference type="GO" id="GO:0061542">
    <property type="term" value="F:3-demethylubiquinol 3-O-methyltransferase activity"/>
    <property type="evidence" value="ECO:0007669"/>
    <property type="project" value="UniProtKB-UniRule"/>
</dbReference>
<dbReference type="GO" id="GO:0010420">
    <property type="term" value="F:polyprenyldihydroxybenzoate methyltransferase activity"/>
    <property type="evidence" value="ECO:0007669"/>
    <property type="project" value="InterPro"/>
</dbReference>
<dbReference type="GO" id="GO:0032259">
    <property type="term" value="P:methylation"/>
    <property type="evidence" value="ECO:0007669"/>
    <property type="project" value="UniProtKB-KW"/>
</dbReference>
<dbReference type="CDD" id="cd02440">
    <property type="entry name" value="AdoMet_MTases"/>
    <property type="match status" value="1"/>
</dbReference>
<dbReference type="FunFam" id="3.40.50.150:FF:000028">
    <property type="entry name" value="Ubiquinone biosynthesis O-methyltransferase"/>
    <property type="match status" value="1"/>
</dbReference>
<dbReference type="Gene3D" id="3.40.50.150">
    <property type="entry name" value="Vaccinia Virus protein VP39"/>
    <property type="match status" value="1"/>
</dbReference>
<dbReference type="HAMAP" id="MF_00472">
    <property type="entry name" value="UbiG"/>
    <property type="match status" value="1"/>
</dbReference>
<dbReference type="InterPro" id="IPR029063">
    <property type="entry name" value="SAM-dependent_MTases_sf"/>
</dbReference>
<dbReference type="InterPro" id="IPR010233">
    <property type="entry name" value="UbiG_MeTrfase"/>
</dbReference>
<dbReference type="NCBIfam" id="TIGR01983">
    <property type="entry name" value="UbiG"/>
    <property type="match status" value="1"/>
</dbReference>
<dbReference type="PANTHER" id="PTHR43464">
    <property type="entry name" value="METHYLTRANSFERASE"/>
    <property type="match status" value="1"/>
</dbReference>
<dbReference type="PANTHER" id="PTHR43464:SF19">
    <property type="entry name" value="UBIQUINONE BIOSYNTHESIS O-METHYLTRANSFERASE, MITOCHONDRIAL"/>
    <property type="match status" value="1"/>
</dbReference>
<dbReference type="Pfam" id="PF13489">
    <property type="entry name" value="Methyltransf_23"/>
    <property type="match status" value="1"/>
</dbReference>
<dbReference type="SUPFAM" id="SSF53335">
    <property type="entry name" value="S-adenosyl-L-methionine-dependent methyltransferases"/>
    <property type="match status" value="1"/>
</dbReference>
<proteinExistence type="inferred from homology"/>
<protein>
    <recommendedName>
        <fullName evidence="1">Ubiquinone biosynthesis O-methyltransferase</fullName>
    </recommendedName>
    <alternativeName>
        <fullName evidence="1">2-polyprenyl-6-hydroxyphenol methylase</fullName>
        <ecNumber evidence="1">2.1.1.222</ecNumber>
    </alternativeName>
    <alternativeName>
        <fullName evidence="1">3-demethylubiquinone 3-O-methyltransferase</fullName>
        <ecNumber evidence="1">2.1.1.64</ecNumber>
    </alternativeName>
</protein>
<feature type="chain" id="PRO_1000206356" description="Ubiquinone biosynthesis O-methyltransferase">
    <location>
        <begin position="1"/>
        <end position="238"/>
    </location>
</feature>
<feature type="binding site" evidence="1">
    <location>
        <position position="38"/>
    </location>
    <ligand>
        <name>S-adenosyl-L-methionine</name>
        <dbReference type="ChEBI" id="CHEBI:59789"/>
    </ligand>
</feature>
<feature type="binding site" evidence="1">
    <location>
        <position position="57"/>
    </location>
    <ligand>
        <name>S-adenosyl-L-methionine</name>
        <dbReference type="ChEBI" id="CHEBI:59789"/>
    </ligand>
</feature>
<feature type="binding site" evidence="1">
    <location>
        <position position="78"/>
    </location>
    <ligand>
        <name>S-adenosyl-L-methionine</name>
        <dbReference type="ChEBI" id="CHEBI:59789"/>
    </ligand>
</feature>
<feature type="binding site" evidence="1">
    <location>
        <position position="124"/>
    </location>
    <ligand>
        <name>S-adenosyl-L-methionine</name>
        <dbReference type="ChEBI" id="CHEBI:59789"/>
    </ligand>
</feature>
<name>UBIG_MARN8</name>
<keyword id="KW-0489">Methyltransferase</keyword>
<keyword id="KW-0949">S-adenosyl-L-methionine</keyword>
<keyword id="KW-0808">Transferase</keyword>
<keyword id="KW-0831">Ubiquinone biosynthesis</keyword>
<comment type="function">
    <text evidence="1">O-methyltransferase that catalyzes the 2 O-methylation steps in the ubiquinone biosynthetic pathway.</text>
</comment>
<comment type="catalytic activity">
    <reaction evidence="1">
        <text>a 3-demethylubiquinol + S-adenosyl-L-methionine = a ubiquinol + S-adenosyl-L-homocysteine + H(+)</text>
        <dbReference type="Rhea" id="RHEA:44380"/>
        <dbReference type="Rhea" id="RHEA-COMP:9566"/>
        <dbReference type="Rhea" id="RHEA-COMP:10914"/>
        <dbReference type="ChEBI" id="CHEBI:15378"/>
        <dbReference type="ChEBI" id="CHEBI:17976"/>
        <dbReference type="ChEBI" id="CHEBI:57856"/>
        <dbReference type="ChEBI" id="CHEBI:59789"/>
        <dbReference type="ChEBI" id="CHEBI:84422"/>
        <dbReference type="EC" id="2.1.1.64"/>
    </reaction>
</comment>
<comment type="catalytic activity">
    <reaction evidence="1">
        <text>a 3-(all-trans-polyprenyl)benzene-1,2-diol + S-adenosyl-L-methionine = a 2-methoxy-6-(all-trans-polyprenyl)phenol + S-adenosyl-L-homocysteine + H(+)</text>
        <dbReference type="Rhea" id="RHEA:31411"/>
        <dbReference type="Rhea" id="RHEA-COMP:9550"/>
        <dbReference type="Rhea" id="RHEA-COMP:9551"/>
        <dbReference type="ChEBI" id="CHEBI:15378"/>
        <dbReference type="ChEBI" id="CHEBI:57856"/>
        <dbReference type="ChEBI" id="CHEBI:59789"/>
        <dbReference type="ChEBI" id="CHEBI:62729"/>
        <dbReference type="ChEBI" id="CHEBI:62731"/>
        <dbReference type="EC" id="2.1.1.222"/>
    </reaction>
</comment>
<comment type="pathway">
    <text evidence="1">Cofactor biosynthesis; ubiquinone biosynthesis.</text>
</comment>
<comment type="similarity">
    <text evidence="1">Belongs to the methyltransferase superfamily. UbiG/COQ3 family.</text>
</comment>
<organism>
    <name type="scientific">Marinobacter nauticus (strain ATCC 700491 / DSM 11845 / VT8)</name>
    <name type="common">Marinobacter aquaeolei</name>
    <dbReference type="NCBI Taxonomy" id="351348"/>
    <lineage>
        <taxon>Bacteria</taxon>
        <taxon>Pseudomonadati</taxon>
        <taxon>Pseudomonadota</taxon>
        <taxon>Gammaproteobacteria</taxon>
        <taxon>Pseudomonadales</taxon>
        <taxon>Marinobacteraceae</taxon>
        <taxon>Marinobacter</taxon>
    </lineage>
</organism>